<dbReference type="EMBL" id="CP000088">
    <property type="protein sequence ID" value="AAZ56008.1"/>
    <property type="molecule type" value="Genomic_DNA"/>
</dbReference>
<dbReference type="RefSeq" id="WP_011292398.1">
    <property type="nucleotide sequence ID" value="NC_007333.1"/>
</dbReference>
<dbReference type="SMR" id="Q47NG1"/>
<dbReference type="STRING" id="269800.Tfu_1975"/>
<dbReference type="KEGG" id="tfu:Tfu_1975"/>
<dbReference type="eggNOG" id="COG0236">
    <property type="taxonomic scope" value="Bacteria"/>
</dbReference>
<dbReference type="HOGENOM" id="CLU_108696_5_6_11"/>
<dbReference type="OrthoDB" id="9804551at2"/>
<dbReference type="UniPathway" id="UPA00094"/>
<dbReference type="GO" id="GO:0005829">
    <property type="term" value="C:cytosol"/>
    <property type="evidence" value="ECO:0007669"/>
    <property type="project" value="TreeGrafter"/>
</dbReference>
<dbReference type="GO" id="GO:0016020">
    <property type="term" value="C:membrane"/>
    <property type="evidence" value="ECO:0007669"/>
    <property type="project" value="GOC"/>
</dbReference>
<dbReference type="GO" id="GO:0000035">
    <property type="term" value="F:acyl binding"/>
    <property type="evidence" value="ECO:0007669"/>
    <property type="project" value="TreeGrafter"/>
</dbReference>
<dbReference type="GO" id="GO:0000036">
    <property type="term" value="F:acyl carrier activity"/>
    <property type="evidence" value="ECO:0007669"/>
    <property type="project" value="UniProtKB-UniRule"/>
</dbReference>
<dbReference type="GO" id="GO:0009245">
    <property type="term" value="P:lipid A biosynthetic process"/>
    <property type="evidence" value="ECO:0007669"/>
    <property type="project" value="TreeGrafter"/>
</dbReference>
<dbReference type="Gene3D" id="1.10.1200.10">
    <property type="entry name" value="ACP-like"/>
    <property type="match status" value="1"/>
</dbReference>
<dbReference type="HAMAP" id="MF_01217">
    <property type="entry name" value="Acyl_carrier"/>
    <property type="match status" value="1"/>
</dbReference>
<dbReference type="InterPro" id="IPR003231">
    <property type="entry name" value="ACP"/>
</dbReference>
<dbReference type="InterPro" id="IPR036736">
    <property type="entry name" value="ACP-like_sf"/>
</dbReference>
<dbReference type="InterPro" id="IPR009081">
    <property type="entry name" value="PP-bd_ACP"/>
</dbReference>
<dbReference type="NCBIfam" id="NF002147">
    <property type="entry name" value="PRK00982.1-1"/>
    <property type="match status" value="1"/>
</dbReference>
<dbReference type="NCBIfam" id="NF002148">
    <property type="entry name" value="PRK00982.1-2"/>
    <property type="match status" value="1"/>
</dbReference>
<dbReference type="NCBIfam" id="NF002150">
    <property type="entry name" value="PRK00982.1-4"/>
    <property type="match status" value="1"/>
</dbReference>
<dbReference type="PANTHER" id="PTHR20863">
    <property type="entry name" value="ACYL CARRIER PROTEIN"/>
    <property type="match status" value="1"/>
</dbReference>
<dbReference type="PANTHER" id="PTHR20863:SF76">
    <property type="entry name" value="CARRIER DOMAIN-CONTAINING PROTEIN"/>
    <property type="match status" value="1"/>
</dbReference>
<dbReference type="Pfam" id="PF00550">
    <property type="entry name" value="PP-binding"/>
    <property type="match status" value="1"/>
</dbReference>
<dbReference type="SUPFAM" id="SSF47336">
    <property type="entry name" value="ACP-like"/>
    <property type="match status" value="1"/>
</dbReference>
<dbReference type="PROSITE" id="PS50075">
    <property type="entry name" value="CARRIER"/>
    <property type="match status" value="1"/>
</dbReference>
<accession>Q47NG1</accession>
<comment type="function">
    <text evidence="1">Carrier of the growing fatty acid chain in fatty acid biosynthesis.</text>
</comment>
<comment type="pathway">
    <text evidence="1">Lipid metabolism; fatty acid biosynthesis.</text>
</comment>
<comment type="subcellular location">
    <subcellularLocation>
        <location evidence="1">Cytoplasm</location>
    </subcellularLocation>
</comment>
<comment type="PTM">
    <text evidence="1">4'-phosphopantetheine is transferred from CoA to a specific serine of apo-ACP by AcpS. This modification is essential for activity because fatty acids are bound in thioester linkage to the sulfhydryl of the prosthetic group.</text>
</comment>
<comment type="similarity">
    <text evidence="1">Belongs to the acyl carrier protein (ACP) family.</text>
</comment>
<sequence>MAYSEKEILDGLAEIIDEIAGVPAAEVTPEKSFVDDLDIDSLSMVEIAVAAQDKFGVEIPDDQLKDLKTVQDVINYIQK</sequence>
<evidence type="ECO:0000255" key="1">
    <source>
        <dbReference type="HAMAP-Rule" id="MF_01217"/>
    </source>
</evidence>
<evidence type="ECO:0000255" key="2">
    <source>
        <dbReference type="PROSITE-ProRule" id="PRU00258"/>
    </source>
</evidence>
<reference key="1">
    <citation type="journal article" date="2007" name="J. Bacteriol.">
        <title>Genome sequence and analysis of the soil cellulolytic actinomycete Thermobifida fusca YX.</title>
        <authorList>
            <person name="Lykidis A."/>
            <person name="Mavromatis K."/>
            <person name="Ivanova N."/>
            <person name="Anderson I."/>
            <person name="Land M."/>
            <person name="DiBartolo G."/>
            <person name="Martinez M."/>
            <person name="Lapidus A."/>
            <person name="Lucas S."/>
            <person name="Copeland A."/>
            <person name="Richardson P."/>
            <person name="Wilson D.B."/>
            <person name="Kyrpides N."/>
        </authorList>
    </citation>
    <scope>NUCLEOTIDE SEQUENCE [LARGE SCALE GENOMIC DNA]</scope>
    <source>
        <strain>YX</strain>
    </source>
</reference>
<keyword id="KW-0963">Cytoplasm</keyword>
<keyword id="KW-0275">Fatty acid biosynthesis</keyword>
<keyword id="KW-0276">Fatty acid metabolism</keyword>
<keyword id="KW-0444">Lipid biosynthesis</keyword>
<keyword id="KW-0443">Lipid metabolism</keyword>
<keyword id="KW-0596">Phosphopantetheine</keyword>
<keyword id="KW-0597">Phosphoprotein</keyword>
<protein>
    <recommendedName>
        <fullName evidence="1">Acyl carrier protein</fullName>
        <shortName evidence="1">ACP</shortName>
    </recommendedName>
</protein>
<gene>
    <name evidence="1" type="primary">acpP</name>
    <name type="ordered locus">Tfu_1975</name>
</gene>
<name>ACP_THEFY</name>
<organism>
    <name type="scientific">Thermobifida fusca (strain YX)</name>
    <dbReference type="NCBI Taxonomy" id="269800"/>
    <lineage>
        <taxon>Bacteria</taxon>
        <taxon>Bacillati</taxon>
        <taxon>Actinomycetota</taxon>
        <taxon>Actinomycetes</taxon>
        <taxon>Streptosporangiales</taxon>
        <taxon>Nocardiopsidaceae</taxon>
        <taxon>Thermobifida</taxon>
    </lineage>
</organism>
<proteinExistence type="inferred from homology"/>
<feature type="chain" id="PRO_1000066711" description="Acyl carrier protein">
    <location>
        <begin position="1"/>
        <end position="79"/>
    </location>
</feature>
<feature type="domain" description="Carrier" evidence="2">
    <location>
        <begin position="6"/>
        <end position="79"/>
    </location>
</feature>
<feature type="modified residue" description="O-(pantetheine 4'-phosphoryl)serine" evidence="2">
    <location>
        <position position="41"/>
    </location>
</feature>